<organism>
    <name type="scientific">Rattus norvegicus</name>
    <name type="common">Rat</name>
    <dbReference type="NCBI Taxonomy" id="10116"/>
    <lineage>
        <taxon>Eukaryota</taxon>
        <taxon>Metazoa</taxon>
        <taxon>Chordata</taxon>
        <taxon>Craniata</taxon>
        <taxon>Vertebrata</taxon>
        <taxon>Euteleostomi</taxon>
        <taxon>Mammalia</taxon>
        <taxon>Eutheria</taxon>
        <taxon>Euarchontoglires</taxon>
        <taxon>Glires</taxon>
        <taxon>Rodentia</taxon>
        <taxon>Myomorpha</taxon>
        <taxon>Muroidea</taxon>
        <taxon>Muridae</taxon>
        <taxon>Murinae</taxon>
        <taxon>Rattus</taxon>
    </lineage>
</organism>
<feature type="chain" id="PRO_0000127363" description="Myoblast determination protein 1">
    <location>
        <begin position="1"/>
        <end position="318"/>
    </location>
</feature>
<feature type="domain" description="bHLH" evidence="4">
    <location>
        <begin position="109"/>
        <end position="160"/>
    </location>
</feature>
<feature type="region of interest" description="Disordered" evidence="5">
    <location>
        <begin position="175"/>
        <end position="224"/>
    </location>
</feature>
<feature type="region of interest" description="Disordered" evidence="5">
    <location>
        <begin position="262"/>
        <end position="318"/>
    </location>
</feature>
<feature type="compositionally biased region" description="Polar residues" evidence="5">
    <location>
        <begin position="196"/>
        <end position="206"/>
    </location>
</feature>
<feature type="compositionally biased region" description="Low complexity" evidence="5">
    <location>
        <begin position="262"/>
        <end position="271"/>
    </location>
</feature>
<feature type="compositionally biased region" description="Pro residues" evidence="5">
    <location>
        <begin position="272"/>
        <end position="282"/>
    </location>
</feature>
<feature type="compositionally biased region" description="Polar residues" evidence="5">
    <location>
        <begin position="290"/>
        <end position="304"/>
    </location>
</feature>
<feature type="modified residue" description="N6-methyllysine; by EHMT2" evidence="3">
    <location>
        <position position="104"/>
    </location>
</feature>
<feature type="cross-link" description="Peptide (Met-Gly) (interchain with G-Cter in ubiquitin)" evidence="1">
    <location>
        <position position="1"/>
    </location>
</feature>
<gene>
    <name type="primary">Myod1</name>
    <name type="synonym">Myod</name>
</gene>
<reference key="1">
    <citation type="journal article" date="1992" name="Gene">
        <title>Isolation and structural analysis of the rat MyoD gene.</title>
        <authorList>
            <person name="Vaidya T.B."/>
            <person name="Rhodes S.J."/>
            <person name="Moore J.L."/>
            <person name="Sherman D.A."/>
            <person name="Konieczny S.F."/>
            <person name="Taparowsky E.J."/>
        </authorList>
    </citation>
    <scope>NUCLEOTIDE SEQUENCE [GENOMIC DNA]</scope>
</reference>
<reference key="2">
    <citation type="journal article" date="1997" name="Mol. Cell. Biol.">
        <title>Muscle LIM protein promotes myogenesis by enhancing the activity of MyoD.</title>
        <authorList>
            <person name="Kong Y."/>
            <person name="Flick M.J."/>
            <person name="Kudla A.J."/>
            <person name="Konieczny S.F."/>
        </authorList>
    </citation>
    <scope>INTERACTION WITH CSRP3</scope>
</reference>
<evidence type="ECO:0000250" key="1"/>
<evidence type="ECO:0000250" key="2">
    <source>
        <dbReference type="UniProtKB" id="P10085"/>
    </source>
</evidence>
<evidence type="ECO:0000250" key="3">
    <source>
        <dbReference type="UniProtKB" id="P15172"/>
    </source>
</evidence>
<evidence type="ECO:0000255" key="4">
    <source>
        <dbReference type="PROSITE-ProRule" id="PRU00981"/>
    </source>
</evidence>
<evidence type="ECO:0000256" key="5">
    <source>
        <dbReference type="SAM" id="MobiDB-lite"/>
    </source>
</evidence>
<evidence type="ECO:0000269" key="6">
    <source>
    </source>
</evidence>
<dbReference type="EMBL" id="M84176">
    <property type="protein sequence ID" value="AAA41661.1"/>
    <property type="molecule type" value="Genomic_DNA"/>
</dbReference>
<dbReference type="PIR" id="JC1171">
    <property type="entry name" value="JC1171"/>
</dbReference>
<dbReference type="RefSeq" id="NP_788268.1">
    <property type="nucleotide sequence ID" value="NM_176079.1"/>
</dbReference>
<dbReference type="SMR" id="Q02346"/>
<dbReference type="FunCoup" id="Q02346">
    <property type="interactions" value="53"/>
</dbReference>
<dbReference type="STRING" id="10116.ENSRNOP00000015109"/>
<dbReference type="PhosphoSitePlus" id="Q02346"/>
<dbReference type="PaxDb" id="10116-ENSRNOP00000015109"/>
<dbReference type="GeneID" id="337868"/>
<dbReference type="KEGG" id="rno:337868"/>
<dbReference type="UCSC" id="RGD:631429">
    <property type="organism name" value="rat"/>
</dbReference>
<dbReference type="AGR" id="RGD:631429"/>
<dbReference type="CTD" id="4654"/>
<dbReference type="RGD" id="631429">
    <property type="gene designation" value="Myod1"/>
</dbReference>
<dbReference type="eggNOG" id="KOG3960">
    <property type="taxonomic scope" value="Eukaryota"/>
</dbReference>
<dbReference type="InParanoid" id="Q02346"/>
<dbReference type="OrthoDB" id="10049614at2759"/>
<dbReference type="PhylomeDB" id="Q02346"/>
<dbReference type="Reactome" id="R-RNO-525793">
    <property type="pathway name" value="Myogenesis"/>
</dbReference>
<dbReference type="PRO" id="PR:Q02346"/>
<dbReference type="Proteomes" id="UP000002494">
    <property type="component" value="Unplaced"/>
</dbReference>
<dbReference type="GO" id="GO:0000785">
    <property type="term" value="C:chromatin"/>
    <property type="evidence" value="ECO:0000266"/>
    <property type="project" value="RGD"/>
</dbReference>
<dbReference type="GO" id="GO:0005737">
    <property type="term" value="C:cytoplasm"/>
    <property type="evidence" value="ECO:0000266"/>
    <property type="project" value="RGD"/>
</dbReference>
<dbReference type="GO" id="GO:0000791">
    <property type="term" value="C:euchromatin"/>
    <property type="evidence" value="ECO:0000266"/>
    <property type="project" value="RGD"/>
</dbReference>
<dbReference type="GO" id="GO:0030016">
    <property type="term" value="C:myofibril"/>
    <property type="evidence" value="ECO:0000266"/>
    <property type="project" value="RGD"/>
</dbReference>
<dbReference type="GO" id="GO:0005634">
    <property type="term" value="C:nucleus"/>
    <property type="evidence" value="ECO:0000250"/>
    <property type="project" value="UniProtKB"/>
</dbReference>
<dbReference type="GO" id="GO:0005667">
    <property type="term" value="C:transcription regulator complex"/>
    <property type="evidence" value="ECO:0000266"/>
    <property type="project" value="RGD"/>
</dbReference>
<dbReference type="GO" id="GO:0043425">
    <property type="term" value="F:bHLH transcription factor binding"/>
    <property type="evidence" value="ECO:0000266"/>
    <property type="project" value="RGD"/>
</dbReference>
<dbReference type="GO" id="GO:0003682">
    <property type="term" value="F:chromatin binding"/>
    <property type="evidence" value="ECO:0000250"/>
    <property type="project" value="UniProtKB"/>
</dbReference>
<dbReference type="GO" id="GO:0031490">
    <property type="term" value="F:chromatin DNA binding"/>
    <property type="evidence" value="ECO:0000266"/>
    <property type="project" value="RGD"/>
</dbReference>
<dbReference type="GO" id="GO:0000987">
    <property type="term" value="F:cis-regulatory region sequence-specific DNA binding"/>
    <property type="evidence" value="ECO:0000266"/>
    <property type="project" value="RGD"/>
</dbReference>
<dbReference type="GO" id="GO:0001216">
    <property type="term" value="F:DNA-binding transcription activator activity"/>
    <property type="evidence" value="ECO:0000250"/>
    <property type="project" value="UniProtKB"/>
</dbReference>
<dbReference type="GO" id="GO:0001228">
    <property type="term" value="F:DNA-binding transcription activator activity, RNA polymerase II-specific"/>
    <property type="evidence" value="ECO:0000266"/>
    <property type="project" value="RGD"/>
</dbReference>
<dbReference type="GO" id="GO:0003700">
    <property type="term" value="F:DNA-binding transcription factor activity"/>
    <property type="evidence" value="ECO:0000266"/>
    <property type="project" value="RGD"/>
</dbReference>
<dbReference type="GO" id="GO:0000981">
    <property type="term" value="F:DNA-binding transcription factor activity, RNA polymerase II-specific"/>
    <property type="evidence" value="ECO:0000318"/>
    <property type="project" value="GO_Central"/>
</dbReference>
<dbReference type="GO" id="GO:0070888">
    <property type="term" value="F:E-box binding"/>
    <property type="evidence" value="ECO:0000314"/>
    <property type="project" value="RGD"/>
</dbReference>
<dbReference type="GO" id="GO:0019899">
    <property type="term" value="F:enzyme binding"/>
    <property type="evidence" value="ECO:0000266"/>
    <property type="project" value="RGD"/>
</dbReference>
<dbReference type="GO" id="GO:0016922">
    <property type="term" value="F:nuclear receptor binding"/>
    <property type="evidence" value="ECO:0000266"/>
    <property type="project" value="RGD"/>
</dbReference>
<dbReference type="GO" id="GO:1990841">
    <property type="term" value="F:promoter-specific chromatin binding"/>
    <property type="evidence" value="ECO:0000250"/>
    <property type="project" value="UniProtKB"/>
</dbReference>
<dbReference type="GO" id="GO:0042803">
    <property type="term" value="F:protein homodimerization activity"/>
    <property type="evidence" value="ECO:0000266"/>
    <property type="project" value="RGD"/>
</dbReference>
<dbReference type="GO" id="GO:0000978">
    <property type="term" value="F:RNA polymerase II cis-regulatory region sequence-specific DNA binding"/>
    <property type="evidence" value="ECO:0000266"/>
    <property type="project" value="RGD"/>
</dbReference>
<dbReference type="GO" id="GO:0000977">
    <property type="term" value="F:RNA polymerase II transcription regulatory region sequence-specific DNA binding"/>
    <property type="evidence" value="ECO:0000266"/>
    <property type="project" value="RGD"/>
</dbReference>
<dbReference type="GO" id="GO:0061629">
    <property type="term" value="F:RNA polymerase II-specific DNA-binding transcription factor binding"/>
    <property type="evidence" value="ECO:0000266"/>
    <property type="project" value="RGD"/>
</dbReference>
<dbReference type="GO" id="GO:0043565">
    <property type="term" value="F:sequence-specific DNA binding"/>
    <property type="evidence" value="ECO:0000266"/>
    <property type="project" value="RGD"/>
</dbReference>
<dbReference type="GO" id="GO:1990837">
    <property type="term" value="F:sequence-specific double-stranded DNA binding"/>
    <property type="evidence" value="ECO:0000266"/>
    <property type="project" value="RGD"/>
</dbReference>
<dbReference type="GO" id="GO:0031625">
    <property type="term" value="F:ubiquitin protein ligase binding"/>
    <property type="evidence" value="ECO:0000266"/>
    <property type="project" value="RGD"/>
</dbReference>
<dbReference type="GO" id="GO:0071392">
    <property type="term" value="P:cellular response to estradiol stimulus"/>
    <property type="evidence" value="ECO:0000250"/>
    <property type="project" value="UniProtKB"/>
</dbReference>
<dbReference type="GO" id="GO:0071385">
    <property type="term" value="P:cellular response to glucocorticoid stimulus"/>
    <property type="evidence" value="ECO:0000266"/>
    <property type="project" value="RGD"/>
</dbReference>
<dbReference type="GO" id="GO:0071453">
    <property type="term" value="P:cellular response to oxygen levels"/>
    <property type="evidence" value="ECO:0000266"/>
    <property type="project" value="RGD"/>
</dbReference>
<dbReference type="GO" id="GO:0009267">
    <property type="term" value="P:cellular response to starvation"/>
    <property type="evidence" value="ECO:0000266"/>
    <property type="project" value="RGD"/>
</dbReference>
<dbReference type="GO" id="GO:0071356">
    <property type="term" value="P:cellular response to tumor necrosis factor"/>
    <property type="evidence" value="ECO:0000266"/>
    <property type="project" value="RGD"/>
</dbReference>
<dbReference type="GO" id="GO:0042692">
    <property type="term" value="P:muscle cell differentiation"/>
    <property type="evidence" value="ECO:0000266"/>
    <property type="project" value="RGD"/>
</dbReference>
<dbReference type="GO" id="GO:0007517">
    <property type="term" value="P:muscle organ development"/>
    <property type="evidence" value="ECO:0000266"/>
    <property type="project" value="RGD"/>
</dbReference>
<dbReference type="GO" id="GO:0045445">
    <property type="term" value="P:myoblast differentiation"/>
    <property type="evidence" value="ECO:0000250"/>
    <property type="project" value="UniProtKB"/>
</dbReference>
<dbReference type="GO" id="GO:0007518">
    <property type="term" value="P:myoblast fate determination"/>
    <property type="evidence" value="ECO:0000250"/>
    <property type="project" value="UniProtKB"/>
</dbReference>
<dbReference type="GO" id="GO:0007520">
    <property type="term" value="P:myoblast fusion"/>
    <property type="evidence" value="ECO:0000266"/>
    <property type="project" value="RGD"/>
</dbReference>
<dbReference type="GO" id="GO:0014904">
    <property type="term" value="P:myotube cell development"/>
    <property type="evidence" value="ECO:0000266"/>
    <property type="project" value="RGD"/>
</dbReference>
<dbReference type="GO" id="GO:0014902">
    <property type="term" value="P:myotube differentiation"/>
    <property type="evidence" value="ECO:0000266"/>
    <property type="project" value="RGD"/>
</dbReference>
<dbReference type="GO" id="GO:0014908">
    <property type="term" value="P:myotube differentiation involved in skeletal muscle regeneration"/>
    <property type="evidence" value="ECO:0000266"/>
    <property type="project" value="RGD"/>
</dbReference>
<dbReference type="GO" id="GO:2000818">
    <property type="term" value="P:negative regulation of myoblast proliferation"/>
    <property type="evidence" value="ECO:0000266"/>
    <property type="project" value="RGD"/>
</dbReference>
<dbReference type="GO" id="GO:0045893">
    <property type="term" value="P:positive regulation of DNA-templated transcription"/>
    <property type="evidence" value="ECO:0000266"/>
    <property type="project" value="RGD"/>
</dbReference>
<dbReference type="GO" id="GO:0051149">
    <property type="term" value="P:positive regulation of muscle cell differentiation"/>
    <property type="evidence" value="ECO:0000250"/>
    <property type="project" value="UniProtKB"/>
</dbReference>
<dbReference type="GO" id="GO:0045663">
    <property type="term" value="P:positive regulation of myoblast differentiation"/>
    <property type="evidence" value="ECO:0000318"/>
    <property type="project" value="GO_Central"/>
</dbReference>
<dbReference type="GO" id="GO:1901741">
    <property type="term" value="P:positive regulation of myoblast fusion"/>
    <property type="evidence" value="ECO:0000266"/>
    <property type="project" value="RGD"/>
</dbReference>
<dbReference type="GO" id="GO:0048743">
    <property type="term" value="P:positive regulation of skeletal muscle fiber development"/>
    <property type="evidence" value="ECO:0000318"/>
    <property type="project" value="GO_Central"/>
</dbReference>
<dbReference type="GO" id="GO:0043415">
    <property type="term" value="P:positive regulation of skeletal muscle tissue regeneration"/>
    <property type="evidence" value="ECO:0000250"/>
    <property type="project" value="UniProtKB"/>
</dbReference>
<dbReference type="GO" id="GO:1905382">
    <property type="term" value="P:positive regulation of snRNA transcription by RNA polymerase II"/>
    <property type="evidence" value="ECO:0000250"/>
    <property type="project" value="UniProtKB"/>
</dbReference>
<dbReference type="GO" id="GO:0045944">
    <property type="term" value="P:positive regulation of transcription by RNA polymerase II"/>
    <property type="evidence" value="ECO:0000250"/>
    <property type="project" value="UniProtKB"/>
</dbReference>
<dbReference type="GO" id="GO:0000381">
    <property type="term" value="P:regulation of alternative mRNA splicing, via spliceosome"/>
    <property type="evidence" value="ECO:0000250"/>
    <property type="project" value="UniProtKB"/>
</dbReference>
<dbReference type="GO" id="GO:0010468">
    <property type="term" value="P:regulation of gene expression"/>
    <property type="evidence" value="ECO:0000266"/>
    <property type="project" value="RGD"/>
</dbReference>
<dbReference type="GO" id="GO:0043484">
    <property type="term" value="P:regulation of RNA splicing"/>
    <property type="evidence" value="ECO:0000266"/>
    <property type="project" value="RGD"/>
</dbReference>
<dbReference type="GO" id="GO:0006357">
    <property type="term" value="P:regulation of transcription by RNA polymerase II"/>
    <property type="evidence" value="ECO:0000266"/>
    <property type="project" value="RGD"/>
</dbReference>
<dbReference type="GO" id="GO:0035994">
    <property type="term" value="P:response to muscle stretch"/>
    <property type="evidence" value="ECO:0000270"/>
    <property type="project" value="RGD"/>
</dbReference>
<dbReference type="GO" id="GO:0014732">
    <property type="term" value="P:skeletal muscle atrophy"/>
    <property type="evidence" value="ECO:0000270"/>
    <property type="project" value="RGD"/>
</dbReference>
<dbReference type="GO" id="GO:0035914">
    <property type="term" value="P:skeletal muscle cell differentiation"/>
    <property type="evidence" value="ECO:0000266"/>
    <property type="project" value="RGD"/>
</dbReference>
<dbReference type="GO" id="GO:0043503">
    <property type="term" value="P:skeletal muscle fiber adaptation"/>
    <property type="evidence" value="ECO:0000266"/>
    <property type="project" value="RGD"/>
</dbReference>
<dbReference type="GO" id="GO:0048741">
    <property type="term" value="P:skeletal muscle fiber development"/>
    <property type="evidence" value="ECO:0000266"/>
    <property type="project" value="RGD"/>
</dbReference>
<dbReference type="GO" id="GO:0007519">
    <property type="term" value="P:skeletal muscle tissue development"/>
    <property type="evidence" value="ECO:0000250"/>
    <property type="project" value="UniProtKB"/>
</dbReference>
<dbReference type="GO" id="GO:0043403">
    <property type="term" value="P:skeletal muscle tissue regeneration"/>
    <property type="evidence" value="ECO:0000315"/>
    <property type="project" value="RGD"/>
</dbReference>
<dbReference type="GO" id="GO:0051146">
    <property type="term" value="P:striated muscle cell differentiation"/>
    <property type="evidence" value="ECO:0000250"/>
    <property type="project" value="UniProtKB"/>
</dbReference>
<dbReference type="GO" id="GO:0006366">
    <property type="term" value="P:transcription by RNA polymerase II"/>
    <property type="evidence" value="ECO:0000266"/>
    <property type="project" value="RGD"/>
</dbReference>
<dbReference type="CDD" id="cd18936">
    <property type="entry name" value="bHLH_TS_MYOD1_Myf3"/>
    <property type="match status" value="1"/>
</dbReference>
<dbReference type="FunFam" id="4.10.280.10:FF:000005">
    <property type="entry name" value="Myogenic factor"/>
    <property type="match status" value="1"/>
</dbReference>
<dbReference type="Gene3D" id="4.10.280.10">
    <property type="entry name" value="Helix-loop-helix DNA-binding domain"/>
    <property type="match status" value="1"/>
</dbReference>
<dbReference type="InterPro" id="IPR011598">
    <property type="entry name" value="bHLH_dom"/>
</dbReference>
<dbReference type="InterPro" id="IPR036638">
    <property type="entry name" value="HLH_DNA-bd_sf"/>
</dbReference>
<dbReference type="InterPro" id="IPR022032">
    <property type="entry name" value="Myf5"/>
</dbReference>
<dbReference type="InterPro" id="IPR002546">
    <property type="entry name" value="MyoD_N"/>
</dbReference>
<dbReference type="InterPro" id="IPR039704">
    <property type="entry name" value="Myogenic_factor"/>
</dbReference>
<dbReference type="PANTHER" id="PTHR11534:SF2">
    <property type="entry name" value="MYOBLAST DETERMINATION PROTEIN 1"/>
    <property type="match status" value="1"/>
</dbReference>
<dbReference type="PANTHER" id="PTHR11534">
    <property type="entry name" value="MYOGENIC FACTOR"/>
    <property type="match status" value="1"/>
</dbReference>
<dbReference type="Pfam" id="PF01586">
    <property type="entry name" value="Basic"/>
    <property type="match status" value="1"/>
</dbReference>
<dbReference type="Pfam" id="PF00010">
    <property type="entry name" value="HLH"/>
    <property type="match status" value="1"/>
</dbReference>
<dbReference type="Pfam" id="PF12232">
    <property type="entry name" value="Myf5"/>
    <property type="match status" value="1"/>
</dbReference>
<dbReference type="SMART" id="SM00520">
    <property type="entry name" value="BASIC"/>
    <property type="match status" value="1"/>
</dbReference>
<dbReference type="SMART" id="SM00353">
    <property type="entry name" value="HLH"/>
    <property type="match status" value="1"/>
</dbReference>
<dbReference type="SUPFAM" id="SSF47459">
    <property type="entry name" value="HLH, helix-loop-helix DNA-binding domain"/>
    <property type="match status" value="1"/>
</dbReference>
<dbReference type="PROSITE" id="PS50888">
    <property type="entry name" value="BHLH"/>
    <property type="match status" value="1"/>
</dbReference>
<proteinExistence type="evidence at protein level"/>
<protein>
    <recommendedName>
        <fullName>Myoblast determination protein 1</fullName>
    </recommendedName>
</protein>
<comment type="function">
    <text evidence="1">Acts as a transcriptional activator that promotes transcription of muscle-specific target genes and plays a role in muscle differentiation. Together with MYF5 and MYOG, co-occupies muscle-specific gene promoter core region during myogenesis. Induces fibroblasts to differentiate into myoblasts. Interacts with and is inhibited by the twist protein. This interaction probably involves the basic domains of both proteins (By similarity).</text>
</comment>
<comment type="subunit">
    <text evidence="2 6">Efficient DNA binding requires dimerization with another bHLH protein. Seems to form active heterodimers with ITF-2. Interacts with SUV39H1. Interacts with DDX5. Interacts with CHD2. Interacts with TSC22D3 (By similarity). Interacts with SETD3 (By similarity). Interacts with P-TEFB complex; promotes the transcriptional activity of MYOD1 through its CDK9-mediated phosphorylation (By similarity). Interacts with CSRP3 (PubMed:9234731). Interacts with NUPR1 (By similarity).</text>
</comment>
<comment type="subcellular location">
    <subcellularLocation>
        <location>Nucleus</location>
    </subcellularLocation>
</comment>
<comment type="PTM">
    <text evidence="1">Phosphorylated by CDK9. This phosphorylation promotes its function in muscle differentiation (By similarity).</text>
</comment>
<comment type="PTM">
    <text evidence="1">Acetylated by a complex containing EP300 and PCAF. The acetylation is essential to activate target genes. Conversely, its deacetylation by SIRT1 inhibits its function (By similarity).</text>
</comment>
<comment type="PTM">
    <text evidence="1">Ubiquitinated on the N-terminus; which is required for proteasomal degradation.</text>
</comment>
<comment type="PTM">
    <text evidence="1">Methylation at Lys-104 by EHMT2/G9a inhibits myogenic activity.</text>
</comment>
<sequence length="318" mass="34359">MELLSPPLRDTDLLGPDGSLCSFATRDDFYDDPCFDSPDLRFFEDLDPRLVHVGALLKPEEHAHFPTTVHPGPGAREDEHVRAPSGHHQAGRCLLWACKACKRKTTNADRRKAATMRERRRLSKVNEAFETLKRCTSSNPNQRLPKVEILRNAIRYIEGLQALLRDQDAAPPGAAAFYAPGPLPPGRGSEHYSGDSDASSPRSNCSDGMMDYSGPPSGPRRQNGYDAAYYSEASSEPRPGKSAAVSSLDCLSSIVERISTDSPAAPSLLLPDAPPESPPGPPEETSSSDAEQGTQTPSPDSTPQCPAGSKPNPIYQVL</sequence>
<keyword id="KW-0007">Acetylation</keyword>
<keyword id="KW-0010">Activator</keyword>
<keyword id="KW-0217">Developmental protein</keyword>
<keyword id="KW-0221">Differentiation</keyword>
<keyword id="KW-0238">DNA-binding</keyword>
<keyword id="KW-0488">Methylation</keyword>
<keyword id="KW-0517">Myogenesis</keyword>
<keyword id="KW-0539">Nucleus</keyword>
<keyword id="KW-0597">Phosphoprotein</keyword>
<keyword id="KW-1185">Reference proteome</keyword>
<keyword id="KW-0804">Transcription</keyword>
<keyword id="KW-0805">Transcription regulation</keyword>
<keyword id="KW-0832">Ubl conjugation</keyword>
<name>MYOD1_RAT</name>
<accession>Q02346</accession>